<proteinExistence type="evidence at protein level"/>
<gene>
    <name type="primary">TAF10</name>
    <name type="synonym">TAF2A</name>
    <name type="synonym">TAF2H</name>
    <name type="synonym">TAFII30</name>
</gene>
<name>TAF10_HUMAN</name>
<accession>Q12962</accession>
<accession>O00703</accession>
<accession>Q13175</accession>
<accession>Q6FH13</accession>
<reference key="1">
    <citation type="journal article" date="1994" name="Cell">
        <title>Human TAFII30 is present in a distinct TFIID complex and is required for transcriptional activation by the estrogen receptor.</title>
        <authorList>
            <person name="Jacq X."/>
            <person name="Brou C."/>
            <person name="Lutz Y."/>
            <person name="Davidson I."/>
            <person name="Chambon P."/>
            <person name="Tora L."/>
        </authorList>
    </citation>
    <scope>NUCLEOTIDE SEQUENCE [MRNA]</scope>
    <source>
        <tissue>Liver</tissue>
    </source>
</reference>
<reference key="2">
    <citation type="journal article" date="1995" name="Genomics">
        <title>Organization and chromosomal localization of the gene (TAF2H) encoding the human TBP-associated factor II 30 (TAFII30).</title>
        <authorList>
            <person name="Scheer E."/>
            <person name="Mattei M.-G."/>
            <person name="Jacq X."/>
            <person name="Chambon P."/>
            <person name="Tora L."/>
        </authorList>
    </citation>
    <scope>NUCLEOTIDE SEQUENCE [GENOMIC DNA]</scope>
    <source>
        <tissue>Placenta</tissue>
    </source>
</reference>
<reference key="3">
    <citation type="submission" date="2002-04" db="EMBL/GenBank/DDBJ databases">
        <authorList>
            <consortium name="NIEHS SNPs program"/>
        </authorList>
    </citation>
    <scope>NUCLEOTIDE SEQUENCE [GENOMIC DNA]</scope>
    <scope>VARIANT THR-92</scope>
</reference>
<reference key="4">
    <citation type="submission" date="2004-06" db="EMBL/GenBank/DDBJ databases">
        <title>Cloning of human full open reading frames in Gateway(TM) system entry vector (pDONR201).</title>
        <authorList>
            <person name="Ebert L."/>
            <person name="Schick M."/>
            <person name="Neubert P."/>
            <person name="Schatten R."/>
            <person name="Henze S."/>
            <person name="Korn B."/>
        </authorList>
    </citation>
    <scope>NUCLEOTIDE SEQUENCE [LARGE SCALE MRNA]</scope>
</reference>
<reference key="5">
    <citation type="submission" date="2005-09" db="EMBL/GenBank/DDBJ databases">
        <authorList>
            <person name="Mural R.J."/>
            <person name="Istrail S."/>
            <person name="Sutton G.G."/>
            <person name="Florea L."/>
            <person name="Halpern A.L."/>
            <person name="Mobarry C.M."/>
            <person name="Lippert R."/>
            <person name="Walenz B."/>
            <person name="Shatkay H."/>
            <person name="Dew I."/>
            <person name="Miller J.R."/>
            <person name="Flanigan M.J."/>
            <person name="Edwards N.J."/>
            <person name="Bolanos R."/>
            <person name="Fasulo D."/>
            <person name="Halldorsson B.V."/>
            <person name="Hannenhalli S."/>
            <person name="Turner R."/>
            <person name="Yooseph S."/>
            <person name="Lu F."/>
            <person name="Nusskern D.R."/>
            <person name="Shue B.C."/>
            <person name="Zheng X.H."/>
            <person name="Zhong F."/>
            <person name="Delcher A.L."/>
            <person name="Huson D.H."/>
            <person name="Kravitz S.A."/>
            <person name="Mouchard L."/>
            <person name="Reinert K."/>
            <person name="Remington K.A."/>
            <person name="Clark A.G."/>
            <person name="Waterman M.S."/>
            <person name="Eichler E.E."/>
            <person name="Adams M.D."/>
            <person name="Hunkapiller M.W."/>
            <person name="Myers E.W."/>
            <person name="Venter J.C."/>
        </authorList>
    </citation>
    <scope>NUCLEOTIDE SEQUENCE [LARGE SCALE GENOMIC DNA]</scope>
</reference>
<reference key="6">
    <citation type="journal article" date="2004" name="Genome Res.">
        <title>The status, quality, and expansion of the NIH full-length cDNA project: the Mammalian Gene Collection (MGC).</title>
        <authorList>
            <consortium name="The MGC Project Team"/>
        </authorList>
    </citation>
    <scope>NUCLEOTIDE SEQUENCE [LARGE SCALE MRNA]</scope>
    <source>
        <tissue>Kidney</tissue>
    </source>
</reference>
<reference key="7">
    <citation type="journal article" date="1998" name="Cell">
        <title>Histone-like TAFs within the PCAF histone acetylase complex.</title>
        <authorList>
            <person name="Ogryzko V.V."/>
            <person name="Kotani T."/>
            <person name="Zhang X."/>
            <person name="Schiltz R.L."/>
            <person name="Howard T."/>
            <person name="Yang X.-J."/>
            <person name="Howard B.H."/>
            <person name="Qin J."/>
            <person name="Nakatani Y."/>
        </authorList>
    </citation>
    <scope>PROTEIN SEQUENCE OF 43-67</scope>
    <scope>SUBUNIT</scope>
    <scope>SUBCELLULAR LOCATION</scope>
</reference>
<reference key="8">
    <citation type="journal article" date="1995" name="EMBO J.">
        <title>Cloning and characterization of hTAFII18, hTAFII20 and hTAFII28: three subunits of the human transcription factor TFIID.</title>
        <authorList>
            <person name="Mengus G."/>
            <person name="May M."/>
            <person name="Jacq X."/>
            <person name="Staub A."/>
            <person name="Tora L."/>
            <person name="Chambon P."/>
            <person name="Davidson I."/>
        </authorList>
    </citation>
    <scope>INTERACTION WITH TAF12</scope>
</reference>
<reference key="9">
    <citation type="journal article" date="2001" name="Mol. Cell. Biol.">
        <title>Human STAGA complex is a chromatin-acetylating transcription coactivator that interacts with pre-mRNA splicing and DNA damage-binding factors in vivo.</title>
        <authorList>
            <person name="Martinez E."/>
            <person name="Palhan V.B."/>
            <person name="Tjernberg A."/>
            <person name="Lymar E.S."/>
            <person name="Gamper A.M."/>
            <person name="Kundu T.K."/>
            <person name="Chait B.T."/>
            <person name="Roeder R.G."/>
        </authorList>
    </citation>
    <scope>SUBCELLULAR LOCATION</scope>
    <scope>IDENTIFICATION IN THE STAGA COMPLEX WITH SUPT3H; GCN5L2; KIAA0764; TAF5L; TAF6L; TRRAP; TADA3L; TAF12 AND TAF9</scope>
    <scope>IDENTIFICATION BY MASS SPECTROMETRY</scope>
</reference>
<reference key="10">
    <citation type="journal article" date="1998" name="Mol. Cell">
        <title>The 400 kDa subunit of the PCAF histone acetylase complex belongs to the ATM superfamily.</title>
        <authorList>
            <person name="Vassilev A."/>
            <person name="Yamauchi J."/>
            <person name="Kotani T."/>
            <person name="Prives C."/>
            <person name="Avantaggiati M.L."/>
            <person name="Qin J."/>
            <person name="Nakatani Y."/>
        </authorList>
    </citation>
    <scope>IDENTIFICATION IN THE PCAF COMPLEX WITH TADA2L; TADA3L; TAF5L; SUPT3H; TAF6L; TAF12; TRRAP AND TAF9</scope>
</reference>
<reference key="11">
    <citation type="journal article" date="1999" name="J. Biol. Chem.">
        <title>Identification of TATA-binding protein-free TAFII-containing complex subunits suggests a role in nucleosome acetylation and signal transduction.</title>
        <authorList>
            <person name="Brand M."/>
            <person name="Yamamoto K."/>
            <person name="Staub A."/>
            <person name="Tora L."/>
        </authorList>
    </citation>
    <scope>IDENTIFICATION IN THE TFTC-HAT COMPLEX WITH TAF5L; TAF6L; TADA3L; SUPT3H; TAF2; TAF4; TAF5; TRRAP; GCN5L2 AND TAF10</scope>
</reference>
<reference key="12">
    <citation type="journal article" date="2001" name="Mol. Cell. Biol.">
        <title>The TFIID components human TAFII140 and Drosophila BIP2 (TAFII155) are novel metazoan homologues of yeast TAFII47 containing a histone fold and a PHD finger.</title>
        <authorList>
            <person name="Gangloff Y.G."/>
            <person name="Pointud J.-C."/>
            <person name="Thuault S."/>
            <person name="Carre L."/>
            <person name="Romier C."/>
            <person name="Muratoglu S."/>
            <person name="Brand M."/>
            <person name="Tora L."/>
            <person name="Couderc J.-L."/>
            <person name="Davidson I."/>
        </authorList>
    </citation>
    <scope>INTERACTION WITH TAF3</scope>
</reference>
<reference key="13">
    <citation type="journal article" date="2004" name="Mol. Cell">
        <title>Gene-specific modulation of TAF10 function by SET9-mediated methylation.</title>
        <authorList>
            <person name="Kouskouti A."/>
            <person name="Scheer E."/>
            <person name="Staub A."/>
            <person name="Tora L."/>
            <person name="Talianidis I."/>
        </authorList>
    </citation>
    <scope>METHYLATION AT LYS-189</scope>
    <scope>MUTAGENESIS OF LYS-189</scope>
</reference>
<reference key="14">
    <citation type="journal article" date="2006" name="Nat. Struct. Mol. Biol.">
        <title>Structural basis for the methylation site specificity of SET7/9.</title>
        <authorList>
            <person name="Couture J.-F."/>
            <person name="Collazo E."/>
            <person name="Hauk G."/>
            <person name="Trievel R.C."/>
        </authorList>
    </citation>
    <scope>MOTIF</scope>
    <scope>METHYLATION AT LYS-189</scope>
</reference>
<reference key="15">
    <citation type="journal article" date="2003" name="Proteomics">
        <title>Novel subunits of the TATA binding protein free TAFII-containing transcription complex identified by matrix-assisted laser desorption/ionization-time of flight mass spectrometry following one-dimensional gel electrophoresis.</title>
        <authorList>
            <person name="Cavusoglu N."/>
            <person name="Brand M."/>
            <person name="Tora L."/>
            <person name="van Dorsselaer A."/>
        </authorList>
    </citation>
    <scope>IDENTIFICATION IN THE TFTC-HAT COMPLEX</scope>
    <scope>IDENTIFICATION BY MASS SPECTROMETRY</scope>
</reference>
<reference key="16">
    <citation type="journal article" date="2008" name="Mol. Cell">
        <title>A TFTC/STAGA module mediates histone H2A and H2B deubiquitination, coactivates nuclear receptors, and counteracts heterochromatin silencing.</title>
        <authorList>
            <person name="Zhao Y."/>
            <person name="Lang G."/>
            <person name="Ito S."/>
            <person name="Bonnet J."/>
            <person name="Metzger E."/>
            <person name="Sawatsubashi S."/>
            <person name="Suzuki E."/>
            <person name="Le Guezennec X."/>
            <person name="Stunnenberg H.G."/>
            <person name="Krasnov A."/>
            <person name="Georgieva S.G."/>
            <person name="Schuele R."/>
            <person name="Takeyama K."/>
            <person name="Kato S."/>
            <person name="Tora L."/>
            <person name="Devys D."/>
        </authorList>
    </citation>
    <scope>IDENTIFICATION IN STAGA COMPLEX</scope>
</reference>
<reference key="17">
    <citation type="journal article" date="2009" name="Anal. Chem.">
        <title>Lys-N and trypsin cover complementary parts of the phosphoproteome in a refined SCX-based approach.</title>
        <authorList>
            <person name="Gauci S."/>
            <person name="Helbig A.O."/>
            <person name="Slijper M."/>
            <person name="Krijgsveld J."/>
            <person name="Heck A.J."/>
            <person name="Mohammed S."/>
        </authorList>
    </citation>
    <scope>ACETYLATION [LARGE SCALE ANALYSIS] AT SER-2</scope>
    <scope>CLEAVAGE OF INITIATOR METHIONINE [LARGE SCALE ANALYSIS]</scope>
    <scope>IDENTIFICATION BY MASS SPECTROMETRY [LARGE SCALE ANALYSIS]</scope>
</reference>
<reference key="18">
    <citation type="journal article" date="2011" name="BMC Syst. Biol.">
        <title>Initial characterization of the human central proteome.</title>
        <authorList>
            <person name="Burkard T.R."/>
            <person name="Planyavsky M."/>
            <person name="Kaupe I."/>
            <person name="Breitwieser F.P."/>
            <person name="Buerckstuemmer T."/>
            <person name="Bennett K.L."/>
            <person name="Superti-Furga G."/>
            <person name="Colinge J."/>
        </authorList>
    </citation>
    <scope>IDENTIFICATION BY MASS SPECTROMETRY [LARGE SCALE ANALYSIS]</scope>
</reference>
<reference key="19">
    <citation type="journal article" date="2013" name="J. Proteome Res.">
        <title>Toward a comprehensive characterization of a human cancer cell phosphoproteome.</title>
        <authorList>
            <person name="Zhou H."/>
            <person name="Di Palma S."/>
            <person name="Preisinger C."/>
            <person name="Peng M."/>
            <person name="Polat A.N."/>
            <person name="Heck A.J."/>
            <person name="Mohammed S."/>
        </authorList>
    </citation>
    <scope>PHOSPHORYLATION [LARGE SCALE ANALYSIS] AT SER-44</scope>
    <scope>IDENTIFICATION BY MASS SPECTROMETRY [LARGE SCALE ANALYSIS]</scope>
    <source>
        <tissue>Erythroleukemia</tissue>
    </source>
</reference>
<reference key="20">
    <citation type="journal article" date="2014" name="J. Proteomics">
        <title>An enzyme assisted RP-RPLC approach for in-depth analysis of human liver phosphoproteome.</title>
        <authorList>
            <person name="Bian Y."/>
            <person name="Song C."/>
            <person name="Cheng K."/>
            <person name="Dong M."/>
            <person name="Wang F."/>
            <person name="Huang J."/>
            <person name="Sun D."/>
            <person name="Wang L."/>
            <person name="Ye M."/>
            <person name="Zou H."/>
        </authorList>
    </citation>
    <scope>PHOSPHORYLATION [LARGE SCALE ANALYSIS] AT SER-44 AND THR-48</scope>
    <scope>IDENTIFICATION BY MASS SPECTROMETRY [LARGE SCALE ANALYSIS]</scope>
    <source>
        <tissue>Liver</tissue>
    </source>
</reference>
<reference key="21">
    <citation type="journal article" date="2015" name="Mol. Cell">
        <title>LOXL2 oxidizes methylated TAF10 and controls TFIID-dependent genes during neural progenitor differentiation.</title>
        <authorList>
            <person name="Iturbide A."/>
            <person name="Pascual-Reguant L."/>
            <person name="Fargas L."/>
            <person name="Cebria J.P."/>
            <person name="Alsina B."/>
            <person name="Garcia de Herreros A."/>
            <person name="Peiro S."/>
        </authorList>
    </citation>
    <scope>INTERACTION WITH LOXL2</scope>
    <scope>SUBCELLULAR LOCATION</scope>
    <scope>METHYLATION AT LYS-189</scope>
    <scope>ALLYSINE AT LYS-189</scope>
    <scope>MUTAGENESIS OF LYS-189</scope>
    <scope>IDENTIFICATION BY MASS SPECTROMETRY</scope>
</reference>
<reference evidence="18" key="22">
    <citation type="submission" date="2013-02" db="PDB data bank">
        <title>Methyl CH O Hydrogen Bonds Orchestrate AdoMet-Dependent Methylation.</title>
        <authorList>
            <person name="Horowitz S."/>
            <person name="Dirk L.M.A."/>
            <person name="Yesselman J.D."/>
            <person name="Nimtz J.S."/>
            <person name="Del Rizzo P.A."/>
            <person name="Vander Meulen K.A."/>
            <person name="Butcher S.E."/>
            <person name="Mehl R.A."/>
            <person name="Houtz R.L."/>
            <person name="Al-Hashimi H.M."/>
            <person name="Trievel R.C."/>
        </authorList>
    </citation>
    <scope>X-RAY CRYSTALLOGRAPHY (1.59 ANGSTROMS) OF 186-195</scope>
</reference>
<reference evidence="19 20 21 22 23 24 25 26 27 28" key="23">
    <citation type="journal article" date="2021" name="Science">
        <title>Structural insights into preinitiation complex assembly on core promoters.</title>
        <authorList>
            <person name="Chen X."/>
            <person name="Qi Y."/>
            <person name="Wu Z."/>
            <person name="Wang X."/>
            <person name="Li J."/>
            <person name="Zhao D."/>
            <person name="Hou H."/>
            <person name="Li Y."/>
            <person name="Yu Z."/>
            <person name="Liu W."/>
            <person name="Wang M."/>
            <person name="Ren Y."/>
            <person name="Li Z."/>
            <person name="Yang H."/>
            <person name="Xu Y."/>
        </authorList>
    </citation>
    <scope>STRUCTURE BY ELECTRON MICROSCOPY (2.77 ANGSTROMS)</scope>
    <scope>FUNCTION</scope>
    <scope>IDENTIFICATION IN THE TFIID COMPLEX</scope>
    <scope>SUBUNIT</scope>
</reference>
<keyword id="KW-0002">3D-structure</keyword>
<keyword id="KW-0007">Acetylation</keyword>
<keyword id="KW-0903">Direct protein sequencing</keyword>
<keyword id="KW-0488">Methylation</keyword>
<keyword id="KW-0539">Nucleus</keyword>
<keyword id="KW-0597">Phosphoprotein</keyword>
<keyword id="KW-1267">Proteomics identification</keyword>
<keyword id="KW-1185">Reference proteome</keyword>
<keyword id="KW-0804">Transcription</keyword>
<keyword id="KW-0805">Transcription regulation</keyword>
<evidence type="ECO:0000250" key="1">
    <source>
        <dbReference type="UniProtKB" id="Q8K0H5"/>
    </source>
</evidence>
<evidence type="ECO:0000256" key="2">
    <source>
        <dbReference type="SAM" id="MobiDB-lite"/>
    </source>
</evidence>
<evidence type="ECO:0000269" key="3">
    <source>
    </source>
</evidence>
<evidence type="ECO:0000269" key="4">
    <source>
    </source>
</evidence>
<evidence type="ECO:0000269" key="5">
    <source>
    </source>
</evidence>
<evidence type="ECO:0000269" key="6">
    <source>
    </source>
</evidence>
<evidence type="ECO:0000269" key="7">
    <source>
    </source>
</evidence>
<evidence type="ECO:0000269" key="8">
    <source>
    </source>
</evidence>
<evidence type="ECO:0000269" key="9">
    <source>
    </source>
</evidence>
<evidence type="ECO:0000269" key="10">
    <source>
    </source>
</evidence>
<evidence type="ECO:0000269" key="11">
    <source>
    </source>
</evidence>
<evidence type="ECO:0000269" key="12">
    <source>
    </source>
</evidence>
<evidence type="ECO:0000269" key="13">
    <source>
    </source>
</evidence>
<evidence type="ECO:0000269" key="14">
    <source>
    </source>
</evidence>
<evidence type="ECO:0000269" key="15">
    <source ref="3"/>
</evidence>
<evidence type="ECO:0000305" key="16"/>
<evidence type="ECO:0000305" key="17">
    <source>
    </source>
</evidence>
<evidence type="ECO:0007744" key="18">
    <source>
        <dbReference type="PDB" id="4J7F"/>
    </source>
</evidence>
<evidence type="ECO:0007744" key="19">
    <source>
        <dbReference type="PDB" id="7EDX"/>
    </source>
</evidence>
<evidence type="ECO:0007744" key="20">
    <source>
        <dbReference type="PDB" id="7EG7"/>
    </source>
</evidence>
<evidence type="ECO:0007744" key="21">
    <source>
        <dbReference type="PDB" id="7EG8"/>
    </source>
</evidence>
<evidence type="ECO:0007744" key="22">
    <source>
        <dbReference type="PDB" id="7EG9"/>
    </source>
</evidence>
<evidence type="ECO:0007744" key="23">
    <source>
        <dbReference type="PDB" id="7EGA"/>
    </source>
</evidence>
<evidence type="ECO:0007744" key="24">
    <source>
        <dbReference type="PDB" id="7EGB"/>
    </source>
</evidence>
<evidence type="ECO:0007744" key="25">
    <source>
        <dbReference type="PDB" id="7EGC"/>
    </source>
</evidence>
<evidence type="ECO:0007744" key="26">
    <source>
        <dbReference type="PDB" id="7EGD"/>
    </source>
</evidence>
<evidence type="ECO:0007744" key="27">
    <source>
        <dbReference type="PDB" id="7EGE"/>
    </source>
</evidence>
<evidence type="ECO:0007744" key="28">
    <source>
        <dbReference type="PDB" id="7EGF"/>
    </source>
</evidence>
<evidence type="ECO:0007744" key="29">
    <source>
    </source>
</evidence>
<evidence type="ECO:0007744" key="30">
    <source>
    </source>
</evidence>
<evidence type="ECO:0007744" key="31">
    <source>
    </source>
</evidence>
<evidence type="ECO:0007829" key="32">
    <source>
        <dbReference type="PDB" id="4WV4"/>
    </source>
</evidence>
<evidence type="ECO:0007829" key="33">
    <source>
        <dbReference type="PDB" id="7EGG"/>
    </source>
</evidence>
<sequence>MSCSGSGADPEAAPASAASAPGPAPPVSAPAALPSSTAAENKASPAGTAGGPGAGAAAGGTGPLAARAGEPAERRGAAPVSAGGAAPPEGAISNGVYVLPSAANGDVKPVVSSTPLVDFLMQLEDYTPTIPDAVTGYYLNRAGFEASDPRIIRLISLAAQKFISDIANDALQHCKMKGTASGSSRSKSKDRKYTLTMEDLTPALSEYGINVKKPHYFT</sequence>
<feature type="initiator methionine" description="Removed" evidence="29">
    <location>
        <position position="1"/>
    </location>
</feature>
<feature type="chain" id="PRO_0000118897" description="Transcription initiation factor TFIID subunit 10">
    <location>
        <begin position="2"/>
        <end position="218"/>
    </location>
</feature>
<feature type="region of interest" description="Disordered" evidence="2">
    <location>
        <begin position="1"/>
        <end position="85"/>
    </location>
</feature>
<feature type="short sequence motif" description="[KR]-[STA]-K motif" evidence="17">
    <location>
        <begin position="187"/>
        <end position="189"/>
    </location>
</feature>
<feature type="compositionally biased region" description="Low complexity" evidence="2">
    <location>
        <begin position="1"/>
        <end position="21"/>
    </location>
</feature>
<feature type="compositionally biased region" description="Low complexity" evidence="2">
    <location>
        <begin position="29"/>
        <end position="39"/>
    </location>
</feature>
<feature type="compositionally biased region" description="Gly residues" evidence="2">
    <location>
        <begin position="48"/>
        <end position="62"/>
    </location>
</feature>
<feature type="modified residue" description="N-acetylserine" evidence="29">
    <location>
        <position position="2"/>
    </location>
</feature>
<feature type="modified residue" description="Phosphoserine" evidence="30 31">
    <location>
        <position position="44"/>
    </location>
</feature>
<feature type="modified residue" description="Phosphothreonine" evidence="31">
    <location>
        <position position="48"/>
    </location>
</feature>
<feature type="modified residue" description="Allysine; alternate" evidence="10">
    <location>
        <position position="189"/>
    </location>
</feature>
<feature type="modified residue" description="N6,N6,N6-trimethyllysine; alternate" evidence="7 8 10">
    <location>
        <position position="189"/>
    </location>
</feature>
<feature type="sequence variant" id="VAR_013706" description="In dbSNP:rs3176311." evidence="15">
    <original>I</original>
    <variation>T</variation>
    <location>
        <position position="92"/>
    </location>
</feature>
<feature type="mutagenesis site" description="Abolishes methylation. Does not affect interaction with LOXL2 but greatly reduces deamination by LOXL2." evidence="7 10">
    <original>K</original>
    <variation>Q</variation>
    <location>
        <position position="189"/>
    </location>
</feature>
<feature type="helix" evidence="32">
    <location>
        <begin position="115"/>
        <end position="121"/>
    </location>
</feature>
<feature type="helix" evidence="32">
    <location>
        <begin position="122"/>
        <end position="124"/>
    </location>
</feature>
<feature type="helix" evidence="32">
    <location>
        <begin position="132"/>
        <end position="141"/>
    </location>
</feature>
<feature type="helix" evidence="32">
    <location>
        <begin position="149"/>
        <end position="174"/>
    </location>
</feature>
<feature type="helix" evidence="32">
    <location>
        <begin position="197"/>
        <end position="200"/>
    </location>
</feature>
<feature type="helix" evidence="32">
    <location>
        <begin position="201"/>
        <end position="207"/>
    </location>
</feature>
<feature type="strand" evidence="33">
    <location>
        <begin position="209"/>
        <end position="211"/>
    </location>
</feature>
<organism>
    <name type="scientific">Homo sapiens</name>
    <name type="common">Human</name>
    <dbReference type="NCBI Taxonomy" id="9606"/>
    <lineage>
        <taxon>Eukaryota</taxon>
        <taxon>Metazoa</taxon>
        <taxon>Chordata</taxon>
        <taxon>Craniata</taxon>
        <taxon>Vertebrata</taxon>
        <taxon>Euteleostomi</taxon>
        <taxon>Mammalia</taxon>
        <taxon>Eutheria</taxon>
        <taxon>Euarchontoglires</taxon>
        <taxon>Primates</taxon>
        <taxon>Haplorrhini</taxon>
        <taxon>Catarrhini</taxon>
        <taxon>Hominidae</taxon>
        <taxon>Homo</taxon>
    </lineage>
</organism>
<dbReference type="EMBL" id="U13991">
    <property type="protein sequence ID" value="AAA62230.1"/>
    <property type="molecule type" value="mRNA"/>
</dbReference>
<dbReference type="EMBL" id="U25816">
    <property type="protein sequence ID" value="AAB61242.1"/>
    <property type="molecule type" value="Genomic_DNA"/>
</dbReference>
<dbReference type="EMBL" id="AF498312">
    <property type="protein sequence ID" value="AAM14627.1"/>
    <property type="molecule type" value="Genomic_DNA"/>
</dbReference>
<dbReference type="EMBL" id="CR541943">
    <property type="protein sequence ID" value="CAG46741.1"/>
    <property type="molecule type" value="mRNA"/>
</dbReference>
<dbReference type="EMBL" id="CH471064">
    <property type="protein sequence ID" value="EAW68687.1"/>
    <property type="molecule type" value="Genomic_DNA"/>
</dbReference>
<dbReference type="EMBL" id="BC012088">
    <property type="protein sequence ID" value="AAH12088.1"/>
    <property type="molecule type" value="mRNA"/>
</dbReference>
<dbReference type="CCDS" id="CCDS7769.1"/>
<dbReference type="PIR" id="A57694">
    <property type="entry name" value="A57694"/>
</dbReference>
<dbReference type="RefSeq" id="NP_006275.1">
    <property type="nucleotide sequence ID" value="NM_006284.4"/>
</dbReference>
<dbReference type="PDB" id="2F69">
    <property type="method" value="X-ray"/>
    <property type="resolution" value="1.30 A"/>
    <property type="chains" value="B=186-195"/>
</dbReference>
<dbReference type="PDB" id="3M53">
    <property type="method" value="X-ray"/>
    <property type="resolution" value="1.85 A"/>
    <property type="chains" value="B=186-195"/>
</dbReference>
<dbReference type="PDB" id="3M54">
    <property type="method" value="X-ray"/>
    <property type="resolution" value="1.60 A"/>
    <property type="chains" value="B=186-195"/>
</dbReference>
<dbReference type="PDB" id="3M55">
    <property type="method" value="X-ray"/>
    <property type="resolution" value="1.55 A"/>
    <property type="chains" value="B=186-195"/>
</dbReference>
<dbReference type="PDB" id="3M56">
    <property type="method" value="X-ray"/>
    <property type="resolution" value="1.65 A"/>
    <property type="chains" value="B=186-195"/>
</dbReference>
<dbReference type="PDB" id="3M57">
    <property type="method" value="X-ray"/>
    <property type="resolution" value="1.70 A"/>
    <property type="chains" value="B=186-195"/>
</dbReference>
<dbReference type="PDB" id="3M58">
    <property type="method" value="X-ray"/>
    <property type="resolution" value="1.40 A"/>
    <property type="chains" value="B=186-195"/>
</dbReference>
<dbReference type="PDB" id="3M59">
    <property type="method" value="X-ray"/>
    <property type="resolution" value="1.70 A"/>
    <property type="chains" value="B=186-195"/>
</dbReference>
<dbReference type="PDB" id="3M5A">
    <property type="method" value="X-ray"/>
    <property type="resolution" value="1.75 A"/>
    <property type="chains" value="B=186-195"/>
</dbReference>
<dbReference type="PDB" id="4J7F">
    <property type="method" value="X-ray"/>
    <property type="resolution" value="1.59 A"/>
    <property type="chains" value="B=186-195"/>
</dbReference>
<dbReference type="PDB" id="4J7I">
    <property type="method" value="X-ray"/>
    <property type="resolution" value="2.56 A"/>
    <property type="chains" value="B=186-195"/>
</dbReference>
<dbReference type="PDB" id="4J83">
    <property type="method" value="X-ray"/>
    <property type="resolution" value="1.70 A"/>
    <property type="chains" value="B=186-195"/>
</dbReference>
<dbReference type="PDB" id="4J8O">
    <property type="method" value="X-ray"/>
    <property type="resolution" value="1.63 A"/>
    <property type="chains" value="B=186-195"/>
</dbReference>
<dbReference type="PDB" id="4WV4">
    <property type="method" value="X-ray"/>
    <property type="resolution" value="1.91 A"/>
    <property type="chains" value="A=112-212"/>
</dbReference>
<dbReference type="PDB" id="5EG2">
    <property type="method" value="X-ray"/>
    <property type="resolution" value="1.55 A"/>
    <property type="chains" value="B=186-195"/>
</dbReference>
<dbReference type="PDB" id="6MZC">
    <property type="method" value="EM"/>
    <property type="resolution" value="4.50 A"/>
    <property type="chains" value="O=1-218"/>
</dbReference>
<dbReference type="PDB" id="6MZD">
    <property type="method" value="EM"/>
    <property type="resolution" value="9.80 A"/>
    <property type="chains" value="N=1-218"/>
</dbReference>
<dbReference type="PDB" id="6MZL">
    <property type="method" value="EM"/>
    <property type="resolution" value="23.00 A"/>
    <property type="chains" value="N/O=1-218"/>
</dbReference>
<dbReference type="PDB" id="6MZM">
    <property type="method" value="EM"/>
    <property type="resolution" value="7.50 A"/>
    <property type="chains" value="O=1-218"/>
</dbReference>
<dbReference type="PDB" id="7EDX">
    <property type="method" value="EM"/>
    <property type="resolution" value="4.50 A"/>
    <property type="chains" value="J/j=1-218"/>
</dbReference>
<dbReference type="PDB" id="7EG7">
    <property type="method" value="EM"/>
    <property type="resolution" value="6.20 A"/>
    <property type="chains" value="J/j=1-218"/>
</dbReference>
<dbReference type="PDB" id="7EG8">
    <property type="method" value="EM"/>
    <property type="resolution" value="7.40 A"/>
    <property type="chains" value="J/j=1-218"/>
</dbReference>
<dbReference type="PDB" id="7EG9">
    <property type="method" value="EM"/>
    <property type="resolution" value="3.70 A"/>
    <property type="chains" value="J/j=1-218"/>
</dbReference>
<dbReference type="PDB" id="7EGA">
    <property type="method" value="EM"/>
    <property type="resolution" value="4.10 A"/>
    <property type="chains" value="J/j=1-218"/>
</dbReference>
<dbReference type="PDB" id="7EGB">
    <property type="method" value="EM"/>
    <property type="resolution" value="3.30 A"/>
    <property type="chains" value="J/j=1-218"/>
</dbReference>
<dbReference type="PDB" id="7EGC">
    <property type="method" value="EM"/>
    <property type="resolution" value="3.90 A"/>
    <property type="chains" value="J/j=1-218"/>
</dbReference>
<dbReference type="PDB" id="7EGD">
    <property type="method" value="EM"/>
    <property type="resolution" value="6.75 A"/>
    <property type="chains" value="J/j=1-218"/>
</dbReference>
<dbReference type="PDB" id="7EGE">
    <property type="method" value="EM"/>
    <property type="resolution" value="9.00 A"/>
    <property type="chains" value="J/j=1-218"/>
</dbReference>
<dbReference type="PDB" id="7EGF">
    <property type="method" value="EM"/>
    <property type="resolution" value="3.16 A"/>
    <property type="chains" value="j=1-218"/>
</dbReference>
<dbReference type="PDB" id="7EGG">
    <property type="method" value="EM"/>
    <property type="resolution" value="2.77 A"/>
    <property type="chains" value="J=1-218"/>
</dbReference>
<dbReference type="PDB" id="7EGI">
    <property type="method" value="EM"/>
    <property type="resolution" value="9.82 A"/>
    <property type="chains" value="J/j=1-218"/>
</dbReference>
<dbReference type="PDB" id="7EGJ">
    <property type="method" value="EM"/>
    <property type="resolution" value="8.64 A"/>
    <property type="chains" value="J/j=1-218"/>
</dbReference>
<dbReference type="PDB" id="7ENA">
    <property type="method" value="EM"/>
    <property type="resolution" value="4.07 A"/>
    <property type="chains" value="DJ/Dj=1-218"/>
</dbReference>
<dbReference type="PDB" id="7ENC">
    <property type="method" value="EM"/>
    <property type="resolution" value="4.13 A"/>
    <property type="chains" value="DJ/Dj=1-218"/>
</dbReference>
<dbReference type="PDB" id="7KTR">
    <property type="method" value="EM"/>
    <property type="resolution" value="2.93 A"/>
    <property type="chains" value="H=1-218"/>
</dbReference>
<dbReference type="PDB" id="7KTS">
    <property type="method" value="EM"/>
    <property type="resolution" value="19.09 A"/>
    <property type="chains" value="H=1-218"/>
</dbReference>
<dbReference type="PDB" id="8GXQ">
    <property type="method" value="EM"/>
    <property type="resolution" value="5.04 A"/>
    <property type="chains" value="DJ/Dj=1-218"/>
</dbReference>
<dbReference type="PDB" id="8GXS">
    <property type="method" value="EM"/>
    <property type="resolution" value="4.16 A"/>
    <property type="chains" value="DJ/Dj=1-218"/>
</dbReference>
<dbReference type="PDB" id="8H7G">
    <property type="method" value="EM"/>
    <property type="resolution" value="3.70 A"/>
    <property type="chains" value="O=1-218"/>
</dbReference>
<dbReference type="PDB" id="8WAK">
    <property type="method" value="EM"/>
    <property type="resolution" value="5.47 A"/>
    <property type="chains" value="J/j=1-218"/>
</dbReference>
<dbReference type="PDB" id="8WAL">
    <property type="method" value="EM"/>
    <property type="resolution" value="8.52 A"/>
    <property type="chains" value="J/j=1-218"/>
</dbReference>
<dbReference type="PDB" id="8WAN">
    <property type="method" value="EM"/>
    <property type="resolution" value="6.07 A"/>
    <property type="chains" value="J/j=1-218"/>
</dbReference>
<dbReference type="PDB" id="8WAO">
    <property type="method" value="EM"/>
    <property type="resolution" value="6.40 A"/>
    <property type="chains" value="J/j=1-218"/>
</dbReference>
<dbReference type="PDB" id="8WAP">
    <property type="method" value="EM"/>
    <property type="resolution" value="5.85 A"/>
    <property type="chains" value="J/j=1-218"/>
</dbReference>
<dbReference type="PDB" id="8WAQ">
    <property type="method" value="EM"/>
    <property type="resolution" value="6.29 A"/>
    <property type="chains" value="J/j=1-218"/>
</dbReference>
<dbReference type="PDB" id="8WAR">
    <property type="method" value="EM"/>
    <property type="resolution" value="7.20 A"/>
    <property type="chains" value="J/j=1-218"/>
</dbReference>
<dbReference type="PDB" id="8WAS">
    <property type="method" value="EM"/>
    <property type="resolution" value="6.13 A"/>
    <property type="chains" value="J/j=1-218"/>
</dbReference>
<dbReference type="PDBsum" id="2F69"/>
<dbReference type="PDBsum" id="3M53"/>
<dbReference type="PDBsum" id="3M54"/>
<dbReference type="PDBsum" id="3M55"/>
<dbReference type="PDBsum" id="3M56"/>
<dbReference type="PDBsum" id="3M57"/>
<dbReference type="PDBsum" id="3M58"/>
<dbReference type="PDBsum" id="3M59"/>
<dbReference type="PDBsum" id="3M5A"/>
<dbReference type="PDBsum" id="4J7F"/>
<dbReference type="PDBsum" id="4J7I"/>
<dbReference type="PDBsum" id="4J83"/>
<dbReference type="PDBsum" id="4J8O"/>
<dbReference type="PDBsum" id="4WV4"/>
<dbReference type="PDBsum" id="5EG2"/>
<dbReference type="PDBsum" id="6MZC"/>
<dbReference type="PDBsum" id="6MZD"/>
<dbReference type="PDBsum" id="6MZL"/>
<dbReference type="PDBsum" id="6MZM"/>
<dbReference type="PDBsum" id="7EDX"/>
<dbReference type="PDBsum" id="7EG7"/>
<dbReference type="PDBsum" id="7EG8"/>
<dbReference type="PDBsum" id="7EG9"/>
<dbReference type="PDBsum" id="7EGA"/>
<dbReference type="PDBsum" id="7EGB"/>
<dbReference type="PDBsum" id="7EGC"/>
<dbReference type="PDBsum" id="7EGD"/>
<dbReference type="PDBsum" id="7EGE"/>
<dbReference type="PDBsum" id="7EGF"/>
<dbReference type="PDBsum" id="7EGG"/>
<dbReference type="PDBsum" id="7EGI"/>
<dbReference type="PDBsum" id="7EGJ"/>
<dbReference type="PDBsum" id="7ENA"/>
<dbReference type="PDBsum" id="7ENC"/>
<dbReference type="PDBsum" id="7KTR"/>
<dbReference type="PDBsum" id="7KTS"/>
<dbReference type="PDBsum" id="8GXQ"/>
<dbReference type="PDBsum" id="8GXS"/>
<dbReference type="PDBsum" id="8H7G"/>
<dbReference type="PDBsum" id="8WAK"/>
<dbReference type="PDBsum" id="8WAL"/>
<dbReference type="PDBsum" id="8WAN"/>
<dbReference type="PDBsum" id="8WAO"/>
<dbReference type="PDBsum" id="8WAP"/>
<dbReference type="PDBsum" id="8WAQ"/>
<dbReference type="PDBsum" id="8WAR"/>
<dbReference type="PDBsum" id="8WAS"/>
<dbReference type="EMDB" id="EMD-23027"/>
<dbReference type="EMDB" id="EMD-23028"/>
<dbReference type="EMDB" id="EMD-31075"/>
<dbReference type="EMDB" id="EMD-31107"/>
<dbReference type="EMDB" id="EMD-31108"/>
<dbReference type="EMDB" id="EMD-31109"/>
<dbReference type="EMDB" id="EMD-31110"/>
<dbReference type="EMDB" id="EMD-31111"/>
<dbReference type="EMDB" id="EMD-31112"/>
<dbReference type="EMDB" id="EMD-31113"/>
<dbReference type="EMDB" id="EMD-31114"/>
<dbReference type="EMDB" id="EMD-31115"/>
<dbReference type="EMDB" id="EMD-31116"/>
<dbReference type="EMDB" id="EMD-31118"/>
<dbReference type="EMDB" id="EMD-31119"/>
<dbReference type="EMDB" id="EMD-31204"/>
<dbReference type="EMDB" id="EMD-31207"/>
<dbReference type="EMDB" id="EMD-34359"/>
<dbReference type="EMDB" id="EMD-34360"/>
<dbReference type="EMDB" id="EMD-34520"/>
<dbReference type="EMDB" id="EMD-37395"/>
<dbReference type="EMDB" id="EMD-37396"/>
<dbReference type="EMDB" id="EMD-37398"/>
<dbReference type="EMDB" id="EMD-37399"/>
<dbReference type="EMDB" id="EMD-37400"/>
<dbReference type="EMDB" id="EMD-37401"/>
<dbReference type="EMDB" id="EMD-37402"/>
<dbReference type="EMDB" id="EMD-37403"/>
<dbReference type="EMDB" id="EMD-9298"/>
<dbReference type="EMDB" id="EMD-9302"/>
<dbReference type="EMDB" id="EMD-9305"/>
<dbReference type="EMDB" id="EMD-9306"/>
<dbReference type="SMR" id="Q12962"/>
<dbReference type="BioGRID" id="112744">
    <property type="interactions" value="117"/>
</dbReference>
<dbReference type="ComplexPortal" id="CPX-6802">
    <property type="entry name" value="SAGA complex, KAT2B variant"/>
</dbReference>
<dbReference type="ComplexPortal" id="CPX-900">
    <property type="entry name" value="SAGA complex, KAT2A variant"/>
</dbReference>
<dbReference type="ComplexPortal" id="CPX-903">
    <property type="entry name" value="TFTC histone acetylation complex"/>
</dbReference>
<dbReference type="ComplexPortal" id="CPX-915">
    <property type="entry name" value="General transcription factor complex TFIID"/>
</dbReference>
<dbReference type="ComplexPortal" id="CPX-930">
    <property type="entry name" value="General transcription factor complex TFIID, TAF4B variant"/>
</dbReference>
<dbReference type="ComplexPortal" id="CPX-989">
    <property type="entry name" value="PCAF histone acetylase complex"/>
</dbReference>
<dbReference type="CORUM" id="Q12962"/>
<dbReference type="DIP" id="DIP-297N"/>
<dbReference type="FunCoup" id="Q12962">
    <property type="interactions" value="1035"/>
</dbReference>
<dbReference type="IntAct" id="Q12962">
    <property type="interactions" value="45"/>
</dbReference>
<dbReference type="MINT" id="Q12962"/>
<dbReference type="STRING" id="9606.ENSP00000299424"/>
<dbReference type="GlyGen" id="Q12962">
    <property type="glycosylation" value="1 site, 1 O-linked glycan (1 site)"/>
</dbReference>
<dbReference type="iPTMnet" id="Q12962"/>
<dbReference type="PhosphoSitePlus" id="Q12962"/>
<dbReference type="BioMuta" id="TAF10"/>
<dbReference type="DMDM" id="3024688"/>
<dbReference type="jPOST" id="Q12962"/>
<dbReference type="MassIVE" id="Q12962"/>
<dbReference type="PaxDb" id="9606-ENSP00000299424"/>
<dbReference type="PeptideAtlas" id="Q12962"/>
<dbReference type="ProteomicsDB" id="59056"/>
<dbReference type="Pumba" id="Q12962"/>
<dbReference type="Antibodypedia" id="1301">
    <property type="antibodies" value="150 antibodies from 27 providers"/>
</dbReference>
<dbReference type="DNASU" id="6881"/>
<dbReference type="Ensembl" id="ENST00000299424.9">
    <property type="protein sequence ID" value="ENSP00000299424.4"/>
    <property type="gene ID" value="ENSG00000166337.11"/>
</dbReference>
<dbReference type="GeneID" id="6881"/>
<dbReference type="KEGG" id="hsa:6881"/>
<dbReference type="MANE-Select" id="ENST00000299424.9">
    <property type="protein sequence ID" value="ENSP00000299424.4"/>
    <property type="RefSeq nucleotide sequence ID" value="NM_006284.4"/>
    <property type="RefSeq protein sequence ID" value="NP_006275.1"/>
</dbReference>
<dbReference type="UCSC" id="uc001mej.3">
    <property type="organism name" value="human"/>
</dbReference>
<dbReference type="AGR" id="HGNC:11543"/>
<dbReference type="CTD" id="6881"/>
<dbReference type="DisGeNET" id="6881"/>
<dbReference type="GeneCards" id="TAF10"/>
<dbReference type="HGNC" id="HGNC:11543">
    <property type="gene designation" value="TAF10"/>
</dbReference>
<dbReference type="HPA" id="ENSG00000166337">
    <property type="expression patterns" value="Low tissue specificity"/>
</dbReference>
<dbReference type="MIM" id="600475">
    <property type="type" value="gene"/>
</dbReference>
<dbReference type="neXtProt" id="NX_Q12962"/>
<dbReference type="OpenTargets" id="ENSG00000166337"/>
<dbReference type="PharmGKB" id="PA36318"/>
<dbReference type="VEuPathDB" id="HostDB:ENSG00000166337"/>
<dbReference type="eggNOG" id="KOG3423">
    <property type="taxonomic scope" value="Eukaryota"/>
</dbReference>
<dbReference type="GeneTree" id="ENSGT00390000009368"/>
<dbReference type="HOGENOM" id="CLU_064104_1_0_1"/>
<dbReference type="InParanoid" id="Q12962"/>
<dbReference type="OMA" id="SNCITND"/>
<dbReference type="OrthoDB" id="154356at2759"/>
<dbReference type="PAN-GO" id="Q12962">
    <property type="GO annotations" value="6 GO annotations based on evolutionary models"/>
</dbReference>
<dbReference type="PhylomeDB" id="Q12962"/>
<dbReference type="TreeFam" id="TF313156"/>
<dbReference type="PathwayCommons" id="Q12962"/>
<dbReference type="Reactome" id="R-HSA-167161">
    <property type="pathway name" value="HIV Transcription Initiation"/>
</dbReference>
<dbReference type="Reactome" id="R-HSA-167162">
    <property type="pathway name" value="RNA Polymerase II HIV Promoter Escape"/>
</dbReference>
<dbReference type="Reactome" id="R-HSA-167172">
    <property type="pathway name" value="Transcription of the HIV genome"/>
</dbReference>
<dbReference type="Reactome" id="R-HSA-3214847">
    <property type="pathway name" value="HATs acetylate histones"/>
</dbReference>
<dbReference type="Reactome" id="R-HSA-5689880">
    <property type="pathway name" value="Ub-specific processing proteases"/>
</dbReference>
<dbReference type="Reactome" id="R-HSA-674695">
    <property type="pathway name" value="RNA Polymerase II Pre-transcription Events"/>
</dbReference>
<dbReference type="Reactome" id="R-HSA-6804756">
    <property type="pathway name" value="Regulation of TP53 Activity through Phosphorylation"/>
</dbReference>
<dbReference type="Reactome" id="R-HSA-73776">
    <property type="pathway name" value="RNA Polymerase II Promoter Escape"/>
</dbReference>
<dbReference type="Reactome" id="R-HSA-73779">
    <property type="pathway name" value="RNA Polymerase II Transcription Pre-Initiation And Promoter Opening"/>
</dbReference>
<dbReference type="Reactome" id="R-HSA-75953">
    <property type="pathway name" value="RNA Polymerase II Transcription Initiation"/>
</dbReference>
<dbReference type="Reactome" id="R-HSA-76042">
    <property type="pathway name" value="RNA Polymerase II Transcription Initiation And Promoter Clearance"/>
</dbReference>
<dbReference type="SABIO-RK" id="Q12962"/>
<dbReference type="SignaLink" id="Q12962"/>
<dbReference type="SIGNOR" id="Q12962"/>
<dbReference type="BioGRID-ORCS" id="6881">
    <property type="hits" value="665 hits in 1172 CRISPR screens"/>
</dbReference>
<dbReference type="ChiTaRS" id="TAF10">
    <property type="organism name" value="human"/>
</dbReference>
<dbReference type="EvolutionaryTrace" id="Q12962"/>
<dbReference type="GeneWiki" id="TAF10"/>
<dbReference type="GenomeRNAi" id="6881"/>
<dbReference type="Pharos" id="Q12962">
    <property type="development level" value="Tbio"/>
</dbReference>
<dbReference type="PRO" id="PR:Q12962"/>
<dbReference type="Proteomes" id="UP000005640">
    <property type="component" value="Chromosome 11"/>
</dbReference>
<dbReference type="RNAct" id="Q12962">
    <property type="molecule type" value="protein"/>
</dbReference>
<dbReference type="Bgee" id="ENSG00000166337">
    <property type="expression patterns" value="Expressed in right testis and 102 other cell types or tissues"/>
</dbReference>
<dbReference type="ExpressionAtlas" id="Q12962">
    <property type="expression patterns" value="baseline and differential"/>
</dbReference>
<dbReference type="GO" id="GO:0005737">
    <property type="term" value="C:cytoplasm"/>
    <property type="evidence" value="ECO:0000314"/>
    <property type="project" value="HGNC-UCL"/>
</dbReference>
<dbReference type="GO" id="GO:0001673">
    <property type="term" value="C:male germ cell nucleus"/>
    <property type="evidence" value="ECO:0007669"/>
    <property type="project" value="Ensembl"/>
</dbReference>
<dbReference type="GO" id="GO:0005654">
    <property type="term" value="C:nucleoplasm"/>
    <property type="evidence" value="ECO:0000314"/>
    <property type="project" value="HPA"/>
</dbReference>
<dbReference type="GO" id="GO:0005634">
    <property type="term" value="C:nucleus"/>
    <property type="evidence" value="ECO:0000314"/>
    <property type="project" value="UniProtKB"/>
</dbReference>
<dbReference type="GO" id="GO:0048471">
    <property type="term" value="C:perinuclear region of cytoplasm"/>
    <property type="evidence" value="ECO:0000314"/>
    <property type="project" value="HGNC-UCL"/>
</dbReference>
<dbReference type="GO" id="GO:0000124">
    <property type="term" value="C:SAGA complex"/>
    <property type="evidence" value="ECO:0000314"/>
    <property type="project" value="UniProtKB"/>
</dbReference>
<dbReference type="GO" id="GO:0005669">
    <property type="term" value="C:transcription factor TFIID complex"/>
    <property type="evidence" value="ECO:0000314"/>
    <property type="project" value="UniProtKB"/>
</dbReference>
<dbReference type="GO" id="GO:0033276">
    <property type="term" value="C:transcription factor TFTC complex"/>
    <property type="evidence" value="ECO:0000314"/>
    <property type="project" value="UniProtKB"/>
</dbReference>
<dbReference type="GO" id="GO:0097550">
    <property type="term" value="C:transcription preinitiation complex"/>
    <property type="evidence" value="ECO:0007669"/>
    <property type="project" value="Ensembl"/>
</dbReference>
<dbReference type="GO" id="GO:0003677">
    <property type="term" value="F:DNA binding"/>
    <property type="evidence" value="ECO:0007669"/>
    <property type="project" value="Ensembl"/>
</dbReference>
<dbReference type="GO" id="GO:0019899">
    <property type="term" value="F:enzyme binding"/>
    <property type="evidence" value="ECO:0000353"/>
    <property type="project" value="UniProtKB"/>
</dbReference>
<dbReference type="GO" id="GO:0042802">
    <property type="term" value="F:identical protein binding"/>
    <property type="evidence" value="ECO:0000353"/>
    <property type="project" value="UniProtKB"/>
</dbReference>
<dbReference type="GO" id="GO:0030331">
    <property type="term" value="F:nuclear estrogen receptor binding"/>
    <property type="evidence" value="ECO:0000314"/>
    <property type="project" value="UniProtKB"/>
</dbReference>
<dbReference type="GO" id="GO:1990841">
    <property type="term" value="F:promoter-specific chromatin binding"/>
    <property type="evidence" value="ECO:0000318"/>
    <property type="project" value="GO_Central"/>
</dbReference>
<dbReference type="GO" id="GO:0070063">
    <property type="term" value="F:RNA polymerase binding"/>
    <property type="evidence" value="ECO:0000314"/>
    <property type="project" value="UniProtKB"/>
</dbReference>
<dbReference type="GO" id="GO:0016251">
    <property type="term" value="F:RNA polymerase II general transcription initiation factor activity"/>
    <property type="evidence" value="ECO:0000314"/>
    <property type="project" value="UniProtKB"/>
</dbReference>
<dbReference type="GO" id="GO:1905069">
    <property type="term" value="P:allantois development"/>
    <property type="evidence" value="ECO:0007669"/>
    <property type="project" value="Ensembl"/>
</dbReference>
<dbReference type="GO" id="GO:0006915">
    <property type="term" value="P:apoptotic process"/>
    <property type="evidence" value="ECO:0007669"/>
    <property type="project" value="Ensembl"/>
</dbReference>
<dbReference type="GO" id="GO:0006338">
    <property type="term" value="P:chromatin remodeling"/>
    <property type="evidence" value="ECO:0007669"/>
    <property type="project" value="GOC"/>
</dbReference>
<dbReference type="GO" id="GO:0006352">
    <property type="term" value="P:DNA-templated transcription initiation"/>
    <property type="evidence" value="ECO:0000314"/>
    <property type="project" value="UniProtKB"/>
</dbReference>
<dbReference type="GO" id="GO:0001892">
    <property type="term" value="P:embryonic placenta development"/>
    <property type="evidence" value="ECO:0007669"/>
    <property type="project" value="Ensembl"/>
</dbReference>
<dbReference type="GO" id="GO:0000082">
    <property type="term" value="P:G1/S transition of mitotic cell cycle"/>
    <property type="evidence" value="ECO:0007669"/>
    <property type="project" value="Ensembl"/>
</dbReference>
<dbReference type="GO" id="GO:0070365">
    <property type="term" value="P:hepatocyte differentiation"/>
    <property type="evidence" value="ECO:0007669"/>
    <property type="project" value="Ensembl"/>
</dbReference>
<dbReference type="GO" id="GO:0048371">
    <property type="term" value="P:lateral mesodermal cell differentiation"/>
    <property type="evidence" value="ECO:0007669"/>
    <property type="project" value="Ensembl"/>
</dbReference>
<dbReference type="GO" id="GO:0060173">
    <property type="term" value="P:limb development"/>
    <property type="evidence" value="ECO:0007669"/>
    <property type="project" value="Ensembl"/>
</dbReference>
<dbReference type="GO" id="GO:0042789">
    <property type="term" value="P:mRNA transcription by RNA polymerase II"/>
    <property type="evidence" value="ECO:0000314"/>
    <property type="project" value="ComplexPortal"/>
</dbReference>
<dbReference type="GO" id="GO:0035264">
    <property type="term" value="P:multicellular organism growth"/>
    <property type="evidence" value="ECO:0007669"/>
    <property type="project" value="Ensembl"/>
</dbReference>
<dbReference type="GO" id="GO:0045893">
    <property type="term" value="P:positive regulation of DNA-templated transcription"/>
    <property type="evidence" value="ECO:0000303"/>
    <property type="project" value="ComplexPortal"/>
</dbReference>
<dbReference type="GO" id="GO:0060261">
    <property type="term" value="P:positive regulation of transcription initiation by RNA polymerase II"/>
    <property type="evidence" value="ECO:0000314"/>
    <property type="project" value="ComplexPortal"/>
</dbReference>
<dbReference type="GO" id="GO:0006282">
    <property type="term" value="P:regulation of DNA repair"/>
    <property type="evidence" value="ECO:0000303"/>
    <property type="project" value="ComplexPortal"/>
</dbReference>
<dbReference type="GO" id="GO:0006355">
    <property type="term" value="P:regulation of DNA-templated transcription"/>
    <property type="evidence" value="ECO:0000303"/>
    <property type="project" value="ComplexPortal"/>
</dbReference>
<dbReference type="GO" id="GO:0043484">
    <property type="term" value="P:regulation of RNA splicing"/>
    <property type="evidence" value="ECO:0000303"/>
    <property type="project" value="ComplexPortal"/>
</dbReference>
<dbReference type="GO" id="GO:0006357">
    <property type="term" value="P:regulation of transcription by RNA polymerase II"/>
    <property type="evidence" value="ECO:0000314"/>
    <property type="project" value="ComplexPortal"/>
</dbReference>
<dbReference type="GO" id="GO:0051123">
    <property type="term" value="P:RNA polymerase II preinitiation complex assembly"/>
    <property type="evidence" value="ECO:0000353"/>
    <property type="project" value="ComplexPortal"/>
</dbReference>
<dbReference type="GO" id="GO:0036285">
    <property type="term" value="P:SAGA complex assembly"/>
    <property type="evidence" value="ECO:0007669"/>
    <property type="project" value="Ensembl"/>
</dbReference>
<dbReference type="GO" id="GO:0001756">
    <property type="term" value="P:somitogenesis"/>
    <property type="evidence" value="ECO:0007669"/>
    <property type="project" value="Ensembl"/>
</dbReference>
<dbReference type="GO" id="GO:0006366">
    <property type="term" value="P:transcription by RNA polymerase II"/>
    <property type="evidence" value="ECO:0000305"/>
    <property type="project" value="UniProtKB"/>
</dbReference>
<dbReference type="GO" id="GO:0006367">
    <property type="term" value="P:transcription initiation at RNA polymerase II promoter"/>
    <property type="evidence" value="ECO:0000314"/>
    <property type="project" value="UniProtKB"/>
</dbReference>
<dbReference type="CDD" id="cd07982">
    <property type="entry name" value="HFD_TAF10"/>
    <property type="match status" value="1"/>
</dbReference>
<dbReference type="IDEAL" id="IID00465"/>
<dbReference type="InterPro" id="IPR003923">
    <property type="entry name" value="TAF10"/>
</dbReference>
<dbReference type="PANTHER" id="PTHR21242">
    <property type="entry name" value="TRANSCRIPTION INITIATION FACTOR TFIID SUBUNIT 10"/>
    <property type="match status" value="1"/>
</dbReference>
<dbReference type="PANTHER" id="PTHR21242:SF0">
    <property type="entry name" value="TRANSCRIPTION INITIATION FACTOR TFIID SUBUNIT 10"/>
    <property type="match status" value="1"/>
</dbReference>
<dbReference type="Pfam" id="PF03540">
    <property type="entry name" value="TAF10"/>
    <property type="match status" value="1"/>
</dbReference>
<dbReference type="PIRSF" id="PIRSF017246">
    <property type="entry name" value="TFIID_TAF10"/>
    <property type="match status" value="1"/>
</dbReference>
<dbReference type="PRINTS" id="PR01443">
    <property type="entry name" value="TFIID30KDSUB"/>
</dbReference>
<comment type="function">
    <text evidence="1 3 5 6 9 11 14">The TFIID basal transcription factor complex plays a major role in the initiation of RNA polymerase II (Pol II)-dependent transcription (PubMed:33795473). TFIID recognizes and binds promoters with or without a TATA box via its subunit TBP, a TATA-box-binding protein, and promotes assembly of the pre-initiation complex (PIC) (PubMed:33795473). The TFIID complex consists of TBP and TBP-associated factors (TAFs), including TAF1, TAF2, TAF3, TAF4, TAF5, TAF6, TAF7, TAF8, TAF9, TAF10, TAF11, TAF12 and TAF13 (PubMed:33795473). TAF10 is also component of the PCAF histone acetylase complex, the TATA-binding protein-free TAF complex (TFTC) and the STAGA transcription coactivator-HAT complex (PubMed:10373431, PubMed:11564863, PubMed:12601814, PubMed:18206972, PubMed:9885574). May regulate cyclin E expression (By similarity).</text>
</comment>
<comment type="subunit">
    <text evidence="3 4 5 6 9 10 11 12 14">Component of the TFIID basal transcription factor complex, composed of TATA-box-binding protein TBP, and a number of TBP-associated factors (TAFs), including TAF1, TAF2, TAF3, TAF4, TAF5, TAF6, TAF7, TAF8, TAF9, TAF10, TAF11, TAF12 and TAF13 (PubMed:33795473). Component of the TATA-binding protein-free TAF complex (TFTC), the PCAF histone acetylase complex and the STAGA transcription coactivator-HAT complex (PubMed:10373431, PubMed:11564863, PubMed:12601814, PubMed:18206972, PubMed:9885574). The PCAF complex consists at least of TADA2L/ADA2, TADA3L/ADA3, SUPT3H, TAF5L TAF6L, TAF9, TAF10, TAF12 and TRRAP (PubMed:9885574). The TFTC-HAT complex consists at least of TAF5L, TAF6L, TADA3L, SUPT3H, TAF2, TAF4, TAF5, GCN5L2/GCN5, TAF10 and TRRAP (PubMed:10373431, PubMed:12601814). The STAGA transcription coactivator-HAT complex consists at least of SUPT3H, GCN5L2, TAF5L, TAF6L, SUPT7L, TADA3L, TAD1L, TAF10, TAF12, TRRAP and TAF9 (PubMed:11564863, PubMed:18206972). The STAGA core complex is associated with a subcomplex required for histone deubiquitination composed of ATXN7L3, ENY2 and USP22 (PubMed:18206972). Interacts with TAF3 (PubMed:11438666). Interacts with LOXL2 (PubMed:25959397). Interacts with TAF12 isoform TAFII20; the interaction is direct (PubMed:7729427).</text>
</comment>
<comment type="interaction">
    <interactant intactId="EBI-708376">
        <id>Q12962</id>
    </interactant>
    <interactant intactId="EBI-708350">
        <id>O15265</id>
        <label>ATXN7</label>
    </interactant>
    <organismsDiffer>false</organismsDiffer>
    <experiments>7</experiments>
</comment>
<comment type="interaction">
    <interactant intactId="EBI-708376">
        <id>Q12962</id>
    </interactant>
    <interactant intactId="EBI-1268586">
        <id>Q8WTS6</id>
        <label>SETD7</label>
    </interactant>
    <organismsDiffer>false</organismsDiffer>
    <experiments>4</experiments>
</comment>
<comment type="interaction">
    <interactant intactId="EBI-708376">
        <id>Q12962</id>
    </interactant>
    <interactant intactId="EBI-9089028">
        <id>Q7Z7C8-2</id>
        <label>TAF8</label>
    </interactant>
    <organismsDiffer>false</organismsDiffer>
    <experiments>6</experiments>
</comment>
<comment type="subcellular location">
    <subcellularLocation>
        <location evidence="5 10 13">Nucleus</location>
    </subcellularLocation>
</comment>
<comment type="domain">
    <text evidence="8">The [KR]-[STA]-K motif is specifically recognized by the SETD7 methyltransferase.</text>
</comment>
<comment type="PTM">
    <text evidence="7 8">Monomethylated at Lys-189 by SETD7, leading to increased affinity for RNA polymerase II.</text>
</comment>
<comment type="PTM">
    <text evidence="10">Lysine deamination at Lys-189 to form allysine is mediated by LOXL2. Allysine formation by LOXL2 results in release of TAF10 from promoters, leading to inhibition of TFIID-dependent transcription.</text>
</comment>
<comment type="similarity">
    <text evidence="16">Belongs to the TAF10 family.</text>
</comment>
<protein>
    <recommendedName>
        <fullName>Transcription initiation factor TFIID subunit 10</fullName>
    </recommendedName>
    <alternativeName>
        <fullName>STAF28</fullName>
    </alternativeName>
    <alternativeName>
        <fullName>Transcription initiation factor TFIID 30 kDa subunit</fullName>
        <shortName>TAF(II)30</shortName>
        <shortName>TAFII-30</shortName>
        <shortName>TAFII30</shortName>
    </alternativeName>
</protein>